<organism>
    <name type="scientific">Mycobacterium bovis (strain ATCC BAA-935 / AF2122/97)</name>
    <dbReference type="NCBI Taxonomy" id="233413"/>
    <lineage>
        <taxon>Bacteria</taxon>
        <taxon>Bacillati</taxon>
        <taxon>Actinomycetota</taxon>
        <taxon>Actinomycetes</taxon>
        <taxon>Mycobacteriales</taxon>
        <taxon>Mycobacteriaceae</taxon>
        <taxon>Mycobacterium</taxon>
        <taxon>Mycobacterium tuberculosis complex</taxon>
    </lineage>
</organism>
<evidence type="ECO:0000255" key="1"/>
<evidence type="ECO:0000305" key="2"/>
<accession>P64736</accession>
<accession>A0A1R3XWP6</accession>
<accession>Q10541</accession>
<accession>X2BG33</accession>
<name>Y903_MYCBO</name>
<proteinExistence type="predicted"/>
<dbReference type="EMBL" id="LT708304">
    <property type="protein sequence ID" value="SIT99501.1"/>
    <property type="molecule type" value="Genomic_DNA"/>
</dbReference>
<dbReference type="RefSeq" id="NP_854560.1">
    <property type="nucleotide sequence ID" value="NC_002945.3"/>
</dbReference>
<dbReference type="RefSeq" id="WP_003404603.1">
    <property type="nucleotide sequence ID" value="NC_002945.4"/>
</dbReference>
<dbReference type="KEGG" id="mbo:BQ2027_MB0903C"/>
<dbReference type="PATRIC" id="fig|233413.5.peg.983"/>
<dbReference type="Proteomes" id="UP000001419">
    <property type="component" value="Chromosome"/>
</dbReference>
<dbReference type="GO" id="GO:0005886">
    <property type="term" value="C:plasma membrane"/>
    <property type="evidence" value="ECO:0007669"/>
    <property type="project" value="UniProtKB-SubCell"/>
</dbReference>
<dbReference type="InterPro" id="IPR019681">
    <property type="entry name" value="DUF2530"/>
</dbReference>
<dbReference type="Pfam" id="PF10745">
    <property type="entry name" value="DUF2530"/>
    <property type="match status" value="1"/>
</dbReference>
<sequence>MSVENSQIREPPPLPPVLLEVWPVIAVGALAWLVAAVAAFVVPGLASWRPVTVAGLATGLLGTTIFVWQLAAARRGARGAQAGLETYLDPK</sequence>
<keyword id="KW-1003">Cell membrane</keyword>
<keyword id="KW-0472">Membrane</keyword>
<keyword id="KW-1185">Reference proteome</keyword>
<keyword id="KW-0812">Transmembrane</keyword>
<keyword id="KW-1133">Transmembrane helix</keyword>
<gene>
    <name type="ordered locus">BQ2027_MB0903C</name>
</gene>
<protein>
    <recommendedName>
        <fullName>Uncharacterized protein Mb0903c</fullName>
    </recommendedName>
</protein>
<reference key="1">
    <citation type="journal article" date="2003" name="Proc. Natl. Acad. Sci. U.S.A.">
        <title>The complete genome sequence of Mycobacterium bovis.</title>
        <authorList>
            <person name="Garnier T."/>
            <person name="Eiglmeier K."/>
            <person name="Camus J.-C."/>
            <person name="Medina N."/>
            <person name="Mansoor H."/>
            <person name="Pryor M."/>
            <person name="Duthoy S."/>
            <person name="Grondin S."/>
            <person name="Lacroix C."/>
            <person name="Monsempe C."/>
            <person name="Simon S."/>
            <person name="Harris B."/>
            <person name="Atkin R."/>
            <person name="Doggett J."/>
            <person name="Mayes R."/>
            <person name="Keating L."/>
            <person name="Wheeler P.R."/>
            <person name="Parkhill J."/>
            <person name="Barrell B.G."/>
            <person name="Cole S.T."/>
            <person name="Gordon S.V."/>
            <person name="Hewinson R.G."/>
        </authorList>
    </citation>
    <scope>NUCLEOTIDE SEQUENCE [LARGE SCALE GENOMIC DNA]</scope>
    <source>
        <strain>ATCC BAA-935 / AF2122/97</strain>
    </source>
</reference>
<reference key="2">
    <citation type="journal article" date="2017" name="Genome Announc.">
        <title>Updated reference genome sequence and annotation of Mycobacterium bovis AF2122/97.</title>
        <authorList>
            <person name="Malone K.M."/>
            <person name="Farrell D."/>
            <person name="Stuber T.P."/>
            <person name="Schubert O.T."/>
            <person name="Aebersold R."/>
            <person name="Robbe-Austerman S."/>
            <person name="Gordon S.V."/>
        </authorList>
    </citation>
    <scope>NUCLEOTIDE SEQUENCE [LARGE SCALE GENOMIC DNA]</scope>
    <scope>GENOME REANNOTATION</scope>
    <source>
        <strain>ATCC BAA-935 / AF2122/97</strain>
    </source>
</reference>
<comment type="subcellular location">
    <subcellularLocation>
        <location evidence="2">Cell membrane</location>
        <topology evidence="2">Multi-pass membrane protein</topology>
    </subcellularLocation>
</comment>
<feature type="chain" id="PRO_0000103724" description="Uncharacterized protein Mb0903c">
    <location>
        <begin position="1"/>
        <end position="91"/>
    </location>
</feature>
<feature type="transmembrane region" description="Helical" evidence="1">
    <location>
        <begin position="22"/>
        <end position="42"/>
    </location>
</feature>
<feature type="transmembrane region" description="Helical" evidence="1">
    <location>
        <begin position="53"/>
        <end position="73"/>
    </location>
</feature>